<accession>B1X8W2</accession>
<organism>
    <name type="scientific">Escherichia coli (strain K12 / DH10B)</name>
    <dbReference type="NCBI Taxonomy" id="316385"/>
    <lineage>
        <taxon>Bacteria</taxon>
        <taxon>Pseudomonadati</taxon>
        <taxon>Pseudomonadota</taxon>
        <taxon>Gammaproteobacteria</taxon>
        <taxon>Enterobacterales</taxon>
        <taxon>Enterobacteriaceae</taxon>
        <taxon>Escherichia</taxon>
    </lineage>
</organism>
<protein>
    <recommendedName>
        <fullName evidence="1">CinA-like protein</fullName>
    </recommendedName>
</protein>
<feature type="chain" id="PRO_1000100317" description="CinA-like protein">
    <location>
        <begin position="1"/>
        <end position="400"/>
    </location>
</feature>
<proteinExistence type="inferred from homology"/>
<dbReference type="EMBL" id="CP000948">
    <property type="protein sequence ID" value="ACB03409.1"/>
    <property type="molecule type" value="Genomic_DNA"/>
</dbReference>
<dbReference type="RefSeq" id="WP_000921621.1">
    <property type="nucleotide sequence ID" value="NC_010473.1"/>
</dbReference>
<dbReference type="SMR" id="B1X8W2"/>
<dbReference type="KEGG" id="ecd:ECDH10B_2409"/>
<dbReference type="HOGENOM" id="CLU_030805_9_1_6"/>
<dbReference type="CDD" id="cd00885">
    <property type="entry name" value="cinA"/>
    <property type="match status" value="1"/>
</dbReference>
<dbReference type="Gene3D" id="3.40.980.10">
    <property type="entry name" value="MoaB/Mog-like domain"/>
    <property type="match status" value="1"/>
</dbReference>
<dbReference type="HAMAP" id="MF_00226_B">
    <property type="entry name" value="CinA_B"/>
    <property type="match status" value="1"/>
</dbReference>
<dbReference type="InterPro" id="IPR050101">
    <property type="entry name" value="CinA"/>
</dbReference>
<dbReference type="InterPro" id="IPR036653">
    <property type="entry name" value="CinA-like_C"/>
</dbReference>
<dbReference type="InterPro" id="IPR008135">
    <property type="entry name" value="Competence-induced_CinA"/>
</dbReference>
<dbReference type="InterPro" id="IPR036425">
    <property type="entry name" value="MoaB/Mog-like_dom_sf"/>
</dbReference>
<dbReference type="InterPro" id="IPR001453">
    <property type="entry name" value="MoaB/Mog_dom"/>
</dbReference>
<dbReference type="NCBIfam" id="TIGR00200">
    <property type="entry name" value="cinA_nterm"/>
    <property type="match status" value="1"/>
</dbReference>
<dbReference type="NCBIfam" id="TIGR00177">
    <property type="entry name" value="molyb_syn"/>
    <property type="match status" value="1"/>
</dbReference>
<dbReference type="NCBIfam" id="NF002978">
    <property type="entry name" value="PRK03673.1"/>
    <property type="match status" value="1"/>
</dbReference>
<dbReference type="PANTHER" id="PTHR13939">
    <property type="entry name" value="NICOTINAMIDE-NUCLEOTIDE AMIDOHYDROLASE PNCC"/>
    <property type="match status" value="1"/>
</dbReference>
<dbReference type="PANTHER" id="PTHR13939:SF0">
    <property type="entry name" value="NMN AMIDOHYDROLASE-LIKE PROTEIN YFAY"/>
    <property type="match status" value="1"/>
</dbReference>
<dbReference type="Pfam" id="PF00994">
    <property type="entry name" value="MoCF_biosynth"/>
    <property type="match status" value="1"/>
</dbReference>
<dbReference type="PIRSF" id="PIRSF006728">
    <property type="entry name" value="CinA"/>
    <property type="match status" value="1"/>
</dbReference>
<dbReference type="SMART" id="SM00852">
    <property type="entry name" value="MoCF_biosynth"/>
    <property type="match status" value="1"/>
</dbReference>
<dbReference type="SUPFAM" id="SSF142433">
    <property type="entry name" value="CinA-like"/>
    <property type="match status" value="1"/>
</dbReference>
<dbReference type="SUPFAM" id="SSF53218">
    <property type="entry name" value="Molybdenum cofactor biosynthesis proteins"/>
    <property type="match status" value="1"/>
</dbReference>
<comment type="similarity">
    <text evidence="1">Belongs to the CinA family.</text>
</comment>
<sequence length="400" mass="44226">MLKVEMLSTGDEVLHGQIVDTNAAWLADFFFHQGLPLSRRNTVGDNLDDLVTILRERSQHADVLIVNGGLGPTSDDLSALAAATAKGEGLVLHEAWLKEMERYFHERGRVMAPSNRKQAELPASAEFINNPVGTACGFAVQLNRCLMFFTPGVPSEFKVMVEHEILPRLRERFSLPQPPVCLRLTTFGRSESDLAQSLDTLQLPPGVTMGYRSSMPIIELKLTGPASEQQAMEKLWLDVKRVAGQSVIFEGTEGLPAQISRELQNRQFSLTLSEQFTGGLLALQLSRAGAPLLACEVVPSQEETLAQTAHWITERRANHFAGLALAVSGFENEHLNFALATPDGTFALRVRFSTTRYSLAIRQEVCAMMALNMLRRWLNGQDIASEHGWIEVVESMTLSV</sequence>
<evidence type="ECO:0000255" key="1">
    <source>
        <dbReference type="HAMAP-Rule" id="MF_00226"/>
    </source>
</evidence>
<name>CINAL_ECODH</name>
<reference key="1">
    <citation type="journal article" date="2008" name="J. Bacteriol.">
        <title>The complete genome sequence of Escherichia coli DH10B: insights into the biology of a laboratory workhorse.</title>
        <authorList>
            <person name="Durfee T."/>
            <person name="Nelson R."/>
            <person name="Baldwin S."/>
            <person name="Plunkett G. III"/>
            <person name="Burland V."/>
            <person name="Mau B."/>
            <person name="Petrosino J.F."/>
            <person name="Qin X."/>
            <person name="Muzny D.M."/>
            <person name="Ayele M."/>
            <person name="Gibbs R.A."/>
            <person name="Csorgo B."/>
            <person name="Posfai G."/>
            <person name="Weinstock G.M."/>
            <person name="Blattner F.R."/>
        </authorList>
    </citation>
    <scope>NUCLEOTIDE SEQUENCE [LARGE SCALE GENOMIC DNA]</scope>
    <source>
        <strain>K12 / DH10B</strain>
    </source>
</reference>
<gene>
    <name type="ordered locus">ECDH10B_2409</name>
</gene>